<accession>P0A627</accession>
<accession>A0A1R3XWW2</accession>
<accession>O08115</accession>
<accession>Q50796</accession>
<accession>X2BGM5</accession>
<name>PSTA2_MYCBO</name>
<protein>
    <recommendedName>
        <fullName>Phosphate transport system permease protein PstA 2</fullName>
    </recommendedName>
</protein>
<gene>
    <name type="primary">pstA2</name>
    <name type="ordered locus">BQ2027_MB0961</name>
</gene>
<proteinExistence type="inferred from homology"/>
<keyword id="KW-1003">Cell membrane</keyword>
<keyword id="KW-0472">Membrane</keyword>
<keyword id="KW-0592">Phosphate transport</keyword>
<keyword id="KW-1185">Reference proteome</keyword>
<keyword id="KW-0812">Transmembrane</keyword>
<keyword id="KW-1133">Transmembrane helix</keyword>
<keyword id="KW-0813">Transport</keyword>
<dbReference type="EMBL" id="LT708304">
    <property type="protein sequence ID" value="SIT99559.1"/>
    <property type="molecule type" value="Genomic_DNA"/>
</dbReference>
<dbReference type="RefSeq" id="NP_854618.1">
    <property type="nucleotide sequence ID" value="NC_002945.3"/>
</dbReference>
<dbReference type="SMR" id="P0A627"/>
<dbReference type="TCDB" id="3.A.1.7.4">
    <property type="family name" value="the atp-binding cassette (abc) superfamily"/>
</dbReference>
<dbReference type="KEGG" id="mbo:BQ2027_MB0961"/>
<dbReference type="PATRIC" id="fig|233413.5.peg.1046"/>
<dbReference type="Proteomes" id="UP000001419">
    <property type="component" value="Chromosome"/>
</dbReference>
<dbReference type="GO" id="GO:0005886">
    <property type="term" value="C:plasma membrane"/>
    <property type="evidence" value="ECO:0007669"/>
    <property type="project" value="UniProtKB-SubCell"/>
</dbReference>
<dbReference type="GO" id="GO:0005315">
    <property type="term" value="F:phosphate transmembrane transporter activity"/>
    <property type="evidence" value="ECO:0007669"/>
    <property type="project" value="InterPro"/>
</dbReference>
<dbReference type="GO" id="GO:0035435">
    <property type="term" value="P:phosphate ion transmembrane transport"/>
    <property type="evidence" value="ECO:0007669"/>
    <property type="project" value="InterPro"/>
</dbReference>
<dbReference type="CDD" id="cd06261">
    <property type="entry name" value="TM_PBP2"/>
    <property type="match status" value="1"/>
</dbReference>
<dbReference type="Gene3D" id="1.10.3720.10">
    <property type="entry name" value="MetI-like"/>
    <property type="match status" value="1"/>
</dbReference>
<dbReference type="InterPro" id="IPR000515">
    <property type="entry name" value="MetI-like"/>
</dbReference>
<dbReference type="InterPro" id="IPR035906">
    <property type="entry name" value="MetI-like_sf"/>
</dbReference>
<dbReference type="InterPro" id="IPR005672">
    <property type="entry name" value="Phosphate_PstA"/>
</dbReference>
<dbReference type="InterPro" id="IPR051408">
    <property type="entry name" value="Phosphate_transprt_permease"/>
</dbReference>
<dbReference type="NCBIfam" id="TIGR00974">
    <property type="entry name" value="3a0107s02c"/>
    <property type="match status" value="1"/>
</dbReference>
<dbReference type="PANTHER" id="PTHR42922">
    <property type="entry name" value="PHOSPHATE TRANSPORT SYSTEM PERMEASE PROTEIN PSTA"/>
    <property type="match status" value="1"/>
</dbReference>
<dbReference type="PANTHER" id="PTHR42922:SF1">
    <property type="entry name" value="PHOSPHATE TRANSPORT SYSTEM PERMEASE PROTEIN PSTA"/>
    <property type="match status" value="1"/>
</dbReference>
<dbReference type="Pfam" id="PF00528">
    <property type="entry name" value="BPD_transp_1"/>
    <property type="match status" value="1"/>
</dbReference>
<dbReference type="SUPFAM" id="SSF161098">
    <property type="entry name" value="MetI-like"/>
    <property type="match status" value="1"/>
</dbReference>
<dbReference type="PROSITE" id="PS50928">
    <property type="entry name" value="ABC_TM1"/>
    <property type="match status" value="1"/>
</dbReference>
<feature type="chain" id="PRO_0000060202" description="Phosphate transport system permease protein PstA 2">
    <location>
        <begin position="1"/>
        <end position="301"/>
    </location>
</feature>
<feature type="transmembrane region" description="Helical" evidence="2">
    <location>
        <begin position="36"/>
        <end position="56"/>
    </location>
</feature>
<feature type="transmembrane region" description="Helical" evidence="2">
    <location>
        <begin position="83"/>
        <end position="103"/>
    </location>
</feature>
<feature type="transmembrane region" description="Helical" evidence="2">
    <location>
        <begin position="127"/>
        <end position="147"/>
    </location>
</feature>
<feature type="transmembrane region" description="Helical" evidence="2">
    <location>
        <begin position="149"/>
        <end position="169"/>
    </location>
</feature>
<feature type="transmembrane region" description="Helical" evidence="2">
    <location>
        <begin position="209"/>
        <end position="229"/>
    </location>
</feature>
<feature type="transmembrane region" description="Helical" evidence="2">
    <location>
        <begin position="274"/>
        <end position="294"/>
    </location>
</feature>
<feature type="domain" description="ABC transmembrane type-1" evidence="2">
    <location>
        <begin position="83"/>
        <end position="288"/>
    </location>
</feature>
<evidence type="ECO:0000250" key="1"/>
<evidence type="ECO:0000255" key="2">
    <source>
        <dbReference type="PROSITE-ProRule" id="PRU00441"/>
    </source>
</evidence>
<evidence type="ECO:0000305" key="3"/>
<sequence>MGESAESGSRQLPAMSPPRRSVAYRRKIVDALWWAACVCCLAVVITPTLWMLIGVVSRAVPVFHWSVLVQDSQGNGGGLRNAIIGTAVLAIGVILVGGTVSVLTGIYLSEFATGKTRSILRGAYEVLSGIPSIVLGYVGYLALVVYFDWGFSLAAGVLVLSVMSIPYIAKATESALAQVPTSYREAAEALGLPAGWALRKIVLKTAMPGIVTGMLVALALAIGETAPLLYTAGWSNSPPTGQLTDSPVGYLTYPIWTFYNQPSKSAQDLSYDAALLLIVFLLLLIFIGRLINWLSRRRWDV</sequence>
<comment type="function">
    <text evidence="1">Part of the binding-protein-dependent transport system for phosphate; probably responsible for the translocation of the substrate across the membrane.</text>
</comment>
<comment type="subcellular location">
    <subcellularLocation>
        <location evidence="3">Cell membrane</location>
        <topology evidence="3">Multi-pass membrane protein</topology>
    </subcellularLocation>
</comment>
<comment type="similarity">
    <text evidence="3">Belongs to the binding-protein-dependent transport system permease family. CysTW subfamily.</text>
</comment>
<organism>
    <name type="scientific">Mycobacterium bovis (strain ATCC BAA-935 / AF2122/97)</name>
    <dbReference type="NCBI Taxonomy" id="233413"/>
    <lineage>
        <taxon>Bacteria</taxon>
        <taxon>Bacillati</taxon>
        <taxon>Actinomycetota</taxon>
        <taxon>Actinomycetes</taxon>
        <taxon>Mycobacteriales</taxon>
        <taxon>Mycobacteriaceae</taxon>
        <taxon>Mycobacterium</taxon>
        <taxon>Mycobacterium tuberculosis complex</taxon>
    </lineage>
</organism>
<reference key="1">
    <citation type="journal article" date="2003" name="Proc. Natl. Acad. Sci. U.S.A.">
        <title>The complete genome sequence of Mycobacterium bovis.</title>
        <authorList>
            <person name="Garnier T."/>
            <person name="Eiglmeier K."/>
            <person name="Camus J.-C."/>
            <person name="Medina N."/>
            <person name="Mansoor H."/>
            <person name="Pryor M."/>
            <person name="Duthoy S."/>
            <person name="Grondin S."/>
            <person name="Lacroix C."/>
            <person name="Monsempe C."/>
            <person name="Simon S."/>
            <person name="Harris B."/>
            <person name="Atkin R."/>
            <person name="Doggett J."/>
            <person name="Mayes R."/>
            <person name="Keating L."/>
            <person name="Wheeler P.R."/>
            <person name="Parkhill J."/>
            <person name="Barrell B.G."/>
            <person name="Cole S.T."/>
            <person name="Gordon S.V."/>
            <person name="Hewinson R.G."/>
        </authorList>
    </citation>
    <scope>NUCLEOTIDE SEQUENCE [LARGE SCALE GENOMIC DNA]</scope>
    <source>
        <strain>ATCC BAA-935 / AF2122/97</strain>
    </source>
</reference>
<reference key="2">
    <citation type="journal article" date="2017" name="Genome Announc.">
        <title>Updated reference genome sequence and annotation of Mycobacterium bovis AF2122/97.</title>
        <authorList>
            <person name="Malone K.M."/>
            <person name="Farrell D."/>
            <person name="Stuber T.P."/>
            <person name="Schubert O.T."/>
            <person name="Aebersold R."/>
            <person name="Robbe-Austerman S."/>
            <person name="Gordon S.V."/>
        </authorList>
    </citation>
    <scope>NUCLEOTIDE SEQUENCE [LARGE SCALE GENOMIC DNA]</scope>
    <scope>GENOME REANNOTATION</scope>
    <source>
        <strain>ATCC BAA-935 / AF2122/97</strain>
    </source>
</reference>